<protein>
    <recommendedName>
        <fullName>Vacuolar fusion protein mon1</fullName>
    </recommendedName>
    <alternativeName>
        <fullName>Autophagy-related protein 13</fullName>
    </alternativeName>
</protein>
<evidence type="ECO:0000250" key="1"/>
<evidence type="ECO:0000250" key="2">
    <source>
        <dbReference type="UniProtKB" id="P53129"/>
    </source>
</evidence>
<evidence type="ECO:0000256" key="3">
    <source>
        <dbReference type="SAM" id="MobiDB-lite"/>
    </source>
</evidence>
<evidence type="ECO:0000305" key="4"/>
<feature type="chain" id="PRO_0000278864" description="Vacuolar fusion protein mon1">
    <location>
        <begin position="1"/>
        <end position="678"/>
    </location>
</feature>
<feature type="region of interest" description="Disordered" evidence="3">
    <location>
        <begin position="1"/>
        <end position="116"/>
    </location>
</feature>
<feature type="region of interest" description="Disordered" evidence="3">
    <location>
        <begin position="449"/>
        <end position="474"/>
    </location>
</feature>
<feature type="region of interest" description="Disordered" evidence="3">
    <location>
        <begin position="568"/>
        <end position="591"/>
    </location>
</feature>
<feature type="compositionally biased region" description="Low complexity" evidence="3">
    <location>
        <begin position="10"/>
        <end position="20"/>
    </location>
</feature>
<feature type="compositionally biased region" description="Polar residues" evidence="3">
    <location>
        <begin position="63"/>
        <end position="77"/>
    </location>
</feature>
<feature type="compositionally biased region" description="Low complexity" evidence="3">
    <location>
        <begin position="87"/>
        <end position="105"/>
    </location>
</feature>
<feature type="compositionally biased region" description="Polar residues" evidence="3">
    <location>
        <begin position="106"/>
        <end position="116"/>
    </location>
</feature>
<feature type="compositionally biased region" description="Low complexity" evidence="3">
    <location>
        <begin position="450"/>
        <end position="459"/>
    </location>
</feature>
<feature type="compositionally biased region" description="Pro residues" evidence="3">
    <location>
        <begin position="460"/>
        <end position="471"/>
    </location>
</feature>
<keyword id="KW-0072">Autophagy</keyword>
<keyword id="KW-0967">Endosome</keyword>
<keyword id="KW-0472">Membrane</keyword>
<keyword id="KW-0653">Protein transport</keyword>
<keyword id="KW-1185">Reference proteome</keyword>
<keyword id="KW-0813">Transport</keyword>
<keyword id="KW-0926">Vacuole</keyword>
<sequence>MDRDTEAGSNDGTNDNNDTTIPPHTPESNIEAVDHVPPVPRRPSPKLSDDGASGALHVAAASRPTTQVSTIDISTLSFPDGSRGTFSTSATSATSATSATRSVASPQSSASGYTSPRTDLVETVSVASYPATLRPPGDLADLVTGEFNRRSRAWSMLRTQSSSVQPFEASRTGACDSLTGFEKEFDNIPELGEKGITDEQRLSLWKSKMKHYMILSSAGKPIWSRHGDTSLINSYMGVVQTIISFYEGAKDPLLGFTAGNARFVISTQGPLYFVAISRLGESDAQLRSQLDALYMQILSTLTLPTLKNIFVHRPSTDLRKPLEGTESLLSSLADSFTKGSPSALLGALECLRLRKSHRATINNAFLKCRSDKLLYGLIVAGGKLVSVIRPRKHSLHPSDLQLIFNMLFESGGIRAGGGENWVPLCLPAFNNRGYLYMYVSFFDSVETAEENNSNNTNNPEQPPQPPPPKPVTSPDEEIAIILISADKESFFELKSMRDKLALQLAKNGSLALIQSAARQGRPRIETILNTKPLSKEAGQGQGQGQLSHFLYKSRANVQFCQSSLSPAFETSSPPLPSSSPSENGSSQKTTEKLVSRRRLMTLYHHLHASIHAKHSHLKVLHLVSEDAASLAWITPVFEFYCVAGPNMSSGIMTQCANKVVQWAKREEERLFIIGGGVF</sequence>
<proteinExistence type="inferred from homology"/>
<accession>Q870Q4</accession>
<comment type="function">
    <text evidence="2">In complex with CCZ1, is required for multiple vacuole delivery pathways including the cytoplasm to vacuole transport (Cvt), autophagy, pexophagy and endocytosis. The MON1-CCZ1 complex acts at the fusion of vesicles with the vacuole, through its regulation of the SNARE complex during the coordinated priming and docking stages of fusion, and particularly at the stage of tethering/docking.</text>
</comment>
<comment type="subcellular location">
    <subcellularLocation>
        <location evidence="1">Endosome</location>
        <location evidence="1">Multivesicular body membrane</location>
        <topology evidence="1">Peripheral membrane protein</topology>
    </subcellularLocation>
    <subcellularLocation>
        <location evidence="1">Prevacuolar compartment membrane</location>
        <topology evidence="1">Peripheral membrane protein</topology>
    </subcellularLocation>
    <subcellularLocation>
        <location evidence="1">Vacuole membrane</location>
        <topology evidence="1">Peripheral membrane protein</topology>
    </subcellularLocation>
</comment>
<comment type="similarity">
    <text evidence="4">Belongs to the MON1/SAND family.</text>
</comment>
<organism>
    <name type="scientific">Neurospora crassa (strain ATCC 24698 / 74-OR23-1A / CBS 708.71 / DSM 1257 / FGSC 987)</name>
    <dbReference type="NCBI Taxonomy" id="367110"/>
    <lineage>
        <taxon>Eukaryota</taxon>
        <taxon>Fungi</taxon>
        <taxon>Dikarya</taxon>
        <taxon>Ascomycota</taxon>
        <taxon>Pezizomycotina</taxon>
        <taxon>Sordariomycetes</taxon>
        <taxon>Sordariomycetidae</taxon>
        <taxon>Sordariales</taxon>
        <taxon>Sordariaceae</taxon>
        <taxon>Neurospora</taxon>
    </lineage>
</organism>
<gene>
    <name type="primary">apg-13</name>
    <name type="synonym">mon1</name>
    <name type="ORF">B1D14.310</name>
    <name type="ORF">NCU09220</name>
</gene>
<dbReference type="EMBL" id="BX295539">
    <property type="protein sequence ID" value="CAD79674.1"/>
    <property type="molecule type" value="Genomic_DNA"/>
</dbReference>
<dbReference type="EMBL" id="CM002236">
    <property type="protein sequence ID" value="EAA29928.3"/>
    <property type="molecule type" value="Genomic_DNA"/>
</dbReference>
<dbReference type="RefSeq" id="XP_959164.3">
    <property type="nucleotide sequence ID" value="XM_954071.3"/>
</dbReference>
<dbReference type="SMR" id="Q870Q4"/>
<dbReference type="FunCoup" id="Q870Q4">
    <property type="interactions" value="530"/>
</dbReference>
<dbReference type="STRING" id="367110.Q870Q4"/>
<dbReference type="PaxDb" id="5141-EFNCRP00000008880"/>
<dbReference type="EnsemblFungi" id="EAA29928">
    <property type="protein sequence ID" value="EAA29928"/>
    <property type="gene ID" value="NCU09220"/>
</dbReference>
<dbReference type="GeneID" id="3875286"/>
<dbReference type="KEGG" id="ncr:NCU09220"/>
<dbReference type="VEuPathDB" id="FungiDB:NCU09220"/>
<dbReference type="HOGENOM" id="CLU_014574_5_0_1"/>
<dbReference type="InParanoid" id="Q870Q4"/>
<dbReference type="OrthoDB" id="272411at2759"/>
<dbReference type="Proteomes" id="UP000001805">
    <property type="component" value="Chromosome 1, Linkage Group I"/>
</dbReference>
<dbReference type="GO" id="GO:0000329">
    <property type="term" value="C:fungal-type vacuole membrane"/>
    <property type="evidence" value="ECO:0000318"/>
    <property type="project" value="GO_Central"/>
</dbReference>
<dbReference type="GO" id="GO:0035658">
    <property type="term" value="C:Mon1-Ccz1 complex"/>
    <property type="evidence" value="ECO:0000318"/>
    <property type="project" value="GO_Central"/>
</dbReference>
<dbReference type="GO" id="GO:0032585">
    <property type="term" value="C:multivesicular body membrane"/>
    <property type="evidence" value="ECO:0007669"/>
    <property type="project" value="UniProtKB-SubCell"/>
</dbReference>
<dbReference type="GO" id="GO:0006914">
    <property type="term" value="P:autophagy"/>
    <property type="evidence" value="ECO:0007669"/>
    <property type="project" value="UniProtKB-KW"/>
</dbReference>
<dbReference type="GO" id="GO:0006623">
    <property type="term" value="P:protein targeting to vacuole"/>
    <property type="evidence" value="ECO:0000318"/>
    <property type="project" value="GO_Central"/>
</dbReference>
<dbReference type="GO" id="GO:0016192">
    <property type="term" value="P:vesicle-mediated transport"/>
    <property type="evidence" value="ECO:0007669"/>
    <property type="project" value="InterPro"/>
</dbReference>
<dbReference type="InterPro" id="IPR043972">
    <property type="entry name" value="FUZ/MON1/HPS1_longin_1"/>
</dbReference>
<dbReference type="InterPro" id="IPR043971">
    <property type="entry name" value="FUZ/MON1/HPS1_longin_2"/>
</dbReference>
<dbReference type="InterPro" id="IPR043970">
    <property type="entry name" value="FUZ/MON1/HPS1_longin_3"/>
</dbReference>
<dbReference type="InterPro" id="IPR004353">
    <property type="entry name" value="Mon1"/>
</dbReference>
<dbReference type="PANTHER" id="PTHR13027">
    <property type="entry name" value="SAND PROTEIN-RELATED"/>
    <property type="match status" value="1"/>
</dbReference>
<dbReference type="PANTHER" id="PTHR13027:SF7">
    <property type="entry name" value="VACUOLAR FUSION PROTEIN MON1 HOMOLOG"/>
    <property type="match status" value="1"/>
</dbReference>
<dbReference type="Pfam" id="PF19036">
    <property type="entry name" value="Fuz_longin_1"/>
    <property type="match status" value="1"/>
</dbReference>
<dbReference type="Pfam" id="PF19037">
    <property type="entry name" value="Fuz_longin_2"/>
    <property type="match status" value="1"/>
</dbReference>
<dbReference type="Pfam" id="PF19038">
    <property type="entry name" value="Fuz_longin_3"/>
    <property type="match status" value="1"/>
</dbReference>
<dbReference type="PRINTS" id="PR01546">
    <property type="entry name" value="YEAST73DUF"/>
</dbReference>
<name>MON1_NEUCR</name>
<reference key="1">
    <citation type="journal article" date="2003" name="Nucleic Acids Res.">
        <title>What's in the genome of a filamentous fungus? Analysis of the Neurospora genome sequence.</title>
        <authorList>
            <person name="Mannhaupt G."/>
            <person name="Montrone C."/>
            <person name="Haase D."/>
            <person name="Mewes H.-W."/>
            <person name="Aign V."/>
            <person name="Hoheisel J.D."/>
            <person name="Fartmann B."/>
            <person name="Nyakatura G."/>
            <person name="Kempken F."/>
            <person name="Maier J."/>
            <person name="Schulte U."/>
        </authorList>
    </citation>
    <scope>NUCLEOTIDE SEQUENCE [LARGE SCALE GENOMIC DNA]</scope>
    <source>
        <strain>ATCC 24698 / 74-OR23-1A / CBS 708.71 / DSM 1257 / FGSC 987</strain>
    </source>
</reference>
<reference key="2">
    <citation type="journal article" date="2003" name="Nature">
        <title>The genome sequence of the filamentous fungus Neurospora crassa.</title>
        <authorList>
            <person name="Galagan J.E."/>
            <person name="Calvo S.E."/>
            <person name="Borkovich K.A."/>
            <person name="Selker E.U."/>
            <person name="Read N.D."/>
            <person name="Jaffe D.B."/>
            <person name="FitzHugh W."/>
            <person name="Ma L.-J."/>
            <person name="Smirnov S."/>
            <person name="Purcell S."/>
            <person name="Rehman B."/>
            <person name="Elkins T."/>
            <person name="Engels R."/>
            <person name="Wang S."/>
            <person name="Nielsen C.B."/>
            <person name="Butler J."/>
            <person name="Endrizzi M."/>
            <person name="Qui D."/>
            <person name="Ianakiev P."/>
            <person name="Bell-Pedersen D."/>
            <person name="Nelson M.A."/>
            <person name="Werner-Washburne M."/>
            <person name="Selitrennikoff C.P."/>
            <person name="Kinsey J.A."/>
            <person name="Braun E.L."/>
            <person name="Zelter A."/>
            <person name="Schulte U."/>
            <person name="Kothe G.O."/>
            <person name="Jedd G."/>
            <person name="Mewes H.-W."/>
            <person name="Staben C."/>
            <person name="Marcotte E."/>
            <person name="Greenberg D."/>
            <person name="Roy A."/>
            <person name="Foley K."/>
            <person name="Naylor J."/>
            <person name="Stange-Thomann N."/>
            <person name="Barrett R."/>
            <person name="Gnerre S."/>
            <person name="Kamal M."/>
            <person name="Kamvysselis M."/>
            <person name="Mauceli E.W."/>
            <person name="Bielke C."/>
            <person name="Rudd S."/>
            <person name="Frishman D."/>
            <person name="Krystofova S."/>
            <person name="Rasmussen C."/>
            <person name="Metzenberg R.L."/>
            <person name="Perkins D.D."/>
            <person name="Kroken S."/>
            <person name="Cogoni C."/>
            <person name="Macino G."/>
            <person name="Catcheside D.E.A."/>
            <person name="Li W."/>
            <person name="Pratt R.J."/>
            <person name="Osmani S.A."/>
            <person name="DeSouza C.P.C."/>
            <person name="Glass N.L."/>
            <person name="Orbach M.J."/>
            <person name="Berglund J.A."/>
            <person name="Voelker R."/>
            <person name="Yarden O."/>
            <person name="Plamann M."/>
            <person name="Seiler S."/>
            <person name="Dunlap J.C."/>
            <person name="Radford A."/>
            <person name="Aramayo R."/>
            <person name="Natvig D.O."/>
            <person name="Alex L.A."/>
            <person name="Mannhaupt G."/>
            <person name="Ebbole D.J."/>
            <person name="Freitag M."/>
            <person name="Paulsen I."/>
            <person name="Sachs M.S."/>
            <person name="Lander E.S."/>
            <person name="Nusbaum C."/>
            <person name="Birren B.W."/>
        </authorList>
    </citation>
    <scope>NUCLEOTIDE SEQUENCE [LARGE SCALE GENOMIC DNA]</scope>
    <source>
        <strain>ATCC 24698 / 74-OR23-1A / CBS 708.71 / DSM 1257 / FGSC 987</strain>
    </source>
</reference>